<name>LOLD_BUCAP</name>
<dbReference type="EC" id="7.6.2.-" evidence="1"/>
<dbReference type="EMBL" id="U11045">
    <property type="protein sequence ID" value="AAC05797.1"/>
    <property type="molecule type" value="Genomic_DNA"/>
</dbReference>
<dbReference type="EMBL" id="AE013218">
    <property type="protein sequence ID" value="AAM67841.1"/>
    <property type="molecule type" value="Genomic_DNA"/>
</dbReference>
<dbReference type="PIR" id="I40068">
    <property type="entry name" value="I40068"/>
</dbReference>
<dbReference type="RefSeq" id="WP_011053808.1">
    <property type="nucleotide sequence ID" value="NC_004061.1"/>
</dbReference>
<dbReference type="SMR" id="Q44613"/>
<dbReference type="STRING" id="198804.BUsg_285"/>
<dbReference type="GeneID" id="93003755"/>
<dbReference type="KEGG" id="bas:BUsg_285"/>
<dbReference type="eggNOG" id="COG1136">
    <property type="taxonomic scope" value="Bacteria"/>
</dbReference>
<dbReference type="HOGENOM" id="CLU_000604_1_22_6"/>
<dbReference type="Proteomes" id="UP000000416">
    <property type="component" value="Chromosome"/>
</dbReference>
<dbReference type="GO" id="GO:0005886">
    <property type="term" value="C:plasma membrane"/>
    <property type="evidence" value="ECO:0007669"/>
    <property type="project" value="UniProtKB-SubCell"/>
</dbReference>
<dbReference type="GO" id="GO:0005524">
    <property type="term" value="F:ATP binding"/>
    <property type="evidence" value="ECO:0007669"/>
    <property type="project" value="UniProtKB-KW"/>
</dbReference>
<dbReference type="GO" id="GO:0016887">
    <property type="term" value="F:ATP hydrolysis activity"/>
    <property type="evidence" value="ECO:0007669"/>
    <property type="project" value="InterPro"/>
</dbReference>
<dbReference type="GO" id="GO:0022857">
    <property type="term" value="F:transmembrane transporter activity"/>
    <property type="evidence" value="ECO:0007669"/>
    <property type="project" value="TreeGrafter"/>
</dbReference>
<dbReference type="GO" id="GO:0044874">
    <property type="term" value="P:lipoprotein localization to outer membrane"/>
    <property type="evidence" value="ECO:0007669"/>
    <property type="project" value="TreeGrafter"/>
</dbReference>
<dbReference type="GO" id="GO:0089705">
    <property type="term" value="P:protein localization to outer membrane"/>
    <property type="evidence" value="ECO:0007669"/>
    <property type="project" value="TreeGrafter"/>
</dbReference>
<dbReference type="CDD" id="cd03255">
    <property type="entry name" value="ABC_MJ0796_LolCDE_FtsE"/>
    <property type="match status" value="1"/>
</dbReference>
<dbReference type="FunFam" id="3.40.50.300:FF:000032">
    <property type="entry name" value="Export ABC transporter ATP-binding protein"/>
    <property type="match status" value="1"/>
</dbReference>
<dbReference type="Gene3D" id="3.40.50.300">
    <property type="entry name" value="P-loop containing nucleotide triphosphate hydrolases"/>
    <property type="match status" value="1"/>
</dbReference>
<dbReference type="InterPro" id="IPR003593">
    <property type="entry name" value="AAA+_ATPase"/>
</dbReference>
<dbReference type="InterPro" id="IPR003439">
    <property type="entry name" value="ABC_transporter-like_ATP-bd"/>
</dbReference>
<dbReference type="InterPro" id="IPR017871">
    <property type="entry name" value="ABC_transporter-like_CS"/>
</dbReference>
<dbReference type="InterPro" id="IPR015854">
    <property type="entry name" value="ABC_transpr_LolD-like"/>
</dbReference>
<dbReference type="InterPro" id="IPR011924">
    <property type="entry name" value="LolD_lipo_ATP-bd"/>
</dbReference>
<dbReference type="InterPro" id="IPR017911">
    <property type="entry name" value="MacB-like_ATP-bd"/>
</dbReference>
<dbReference type="InterPro" id="IPR027417">
    <property type="entry name" value="P-loop_NTPase"/>
</dbReference>
<dbReference type="NCBIfam" id="TIGR02211">
    <property type="entry name" value="LolD_lipo_ex"/>
    <property type="match status" value="1"/>
</dbReference>
<dbReference type="PANTHER" id="PTHR24220">
    <property type="entry name" value="IMPORT ATP-BINDING PROTEIN"/>
    <property type="match status" value="1"/>
</dbReference>
<dbReference type="PANTHER" id="PTHR24220:SF689">
    <property type="entry name" value="LIPOPROTEIN-RELEASING SYSTEM ATP-BINDING PROTEIN LOLD"/>
    <property type="match status" value="1"/>
</dbReference>
<dbReference type="Pfam" id="PF00005">
    <property type="entry name" value="ABC_tran"/>
    <property type="match status" value="1"/>
</dbReference>
<dbReference type="SMART" id="SM00382">
    <property type="entry name" value="AAA"/>
    <property type="match status" value="1"/>
</dbReference>
<dbReference type="SUPFAM" id="SSF52540">
    <property type="entry name" value="P-loop containing nucleoside triphosphate hydrolases"/>
    <property type="match status" value="1"/>
</dbReference>
<dbReference type="PROSITE" id="PS00211">
    <property type="entry name" value="ABC_TRANSPORTER_1"/>
    <property type="match status" value="1"/>
</dbReference>
<dbReference type="PROSITE" id="PS50893">
    <property type="entry name" value="ABC_TRANSPORTER_2"/>
    <property type="match status" value="1"/>
</dbReference>
<dbReference type="PROSITE" id="PS51244">
    <property type="entry name" value="LOLD"/>
    <property type="match status" value="1"/>
</dbReference>
<organism>
    <name type="scientific">Buchnera aphidicola subsp. Schizaphis graminum (strain Sg)</name>
    <dbReference type="NCBI Taxonomy" id="198804"/>
    <lineage>
        <taxon>Bacteria</taxon>
        <taxon>Pseudomonadati</taxon>
        <taxon>Pseudomonadota</taxon>
        <taxon>Gammaproteobacteria</taxon>
        <taxon>Enterobacterales</taxon>
        <taxon>Erwiniaceae</taxon>
        <taxon>Buchnera</taxon>
    </lineage>
</organism>
<keyword id="KW-0067">ATP-binding</keyword>
<keyword id="KW-0997">Cell inner membrane</keyword>
<keyword id="KW-1003">Cell membrane</keyword>
<keyword id="KW-0472">Membrane</keyword>
<keyword id="KW-0547">Nucleotide-binding</keyword>
<keyword id="KW-1278">Translocase</keyword>
<keyword id="KW-0813">Transport</keyword>
<protein>
    <recommendedName>
        <fullName evidence="1">Lipoprotein-releasing system ATP-binding protein LolD</fullName>
        <ecNumber evidence="1">7.6.2.-</ecNumber>
    </recommendedName>
</protein>
<gene>
    <name evidence="1" type="primary">lolD</name>
    <name type="ordered locus">BUsg_285</name>
</gene>
<evidence type="ECO:0000255" key="1">
    <source>
        <dbReference type="HAMAP-Rule" id="MF_01708"/>
    </source>
</evidence>
<feature type="chain" id="PRO_0000092426" description="Lipoprotein-releasing system ATP-binding protein LolD">
    <location>
        <begin position="1"/>
        <end position="229"/>
    </location>
</feature>
<feature type="domain" description="ABC transporter" evidence="1">
    <location>
        <begin position="7"/>
        <end position="229"/>
    </location>
</feature>
<feature type="binding site" evidence="1">
    <location>
        <begin position="43"/>
        <end position="50"/>
    </location>
    <ligand>
        <name>ATP</name>
        <dbReference type="ChEBI" id="CHEBI:30616"/>
    </ligand>
</feature>
<sequence length="229" mass="25867">MNNNIILQCINLTKSFYRKKEEIRTLNKISLKIRKGDITFITGKSGSGKSTLLHLLGGLDKPTSGSILFDGVSLHSMSSNEIAKLRNLKLGFIFQFHHLLLDFNVLENIAIPSLISKKSIQESKEKSYEILKKVHLEKKINKYPSELSGGERQRVAIARALVNQPSLVIADEPTSHLDKNNAKIIFDLIFELNSNLNTSFLIVSHDLRFIKKAPILLEMKNGQLFNNKN</sequence>
<reference key="1">
    <citation type="journal article" date="1995" name="Curr. Microbiol.">
        <title>Buchnera aphidicola (aphid-endosymbiont) glyceraldehyde-3-phosphate dehydrogenase: molecular cloning and sequence analysis.</title>
        <authorList>
            <person name="Kolibachuk D."/>
            <person name="Baumann P."/>
        </authorList>
    </citation>
    <scope>NUCLEOTIDE SEQUENCE [GENOMIC DNA]</scope>
</reference>
<reference key="2">
    <citation type="journal article" date="2002" name="Science">
        <title>50 million years of genomic stasis in endosymbiotic bacteria.</title>
        <authorList>
            <person name="Tamas I."/>
            <person name="Klasson L."/>
            <person name="Canbaeck B."/>
            <person name="Naeslund A.K."/>
            <person name="Eriksson A.-S."/>
            <person name="Wernegreen J.J."/>
            <person name="Sandstroem J.P."/>
            <person name="Moran N.A."/>
            <person name="Andersson S.G.E."/>
        </authorList>
    </citation>
    <scope>NUCLEOTIDE SEQUENCE [LARGE SCALE GENOMIC DNA]</scope>
    <source>
        <strain>Sg</strain>
    </source>
</reference>
<proteinExistence type="inferred from homology"/>
<comment type="function">
    <text evidence="1">Part of the ABC transporter complex LolCDE involved in the translocation of mature outer membrane-directed lipoproteins, from the inner membrane to the periplasmic chaperone, LolA. Responsible for the formation of the LolA-lipoprotein complex in an ATP-dependent manner.</text>
</comment>
<comment type="subunit">
    <text evidence="1">The complex is composed of two ATP-binding proteins (LolD) and two transmembrane proteins (LolC and LolE).</text>
</comment>
<comment type="subcellular location">
    <subcellularLocation>
        <location evidence="1">Cell inner membrane</location>
        <topology evidence="1">Peripheral membrane protein</topology>
    </subcellularLocation>
</comment>
<comment type="similarity">
    <text evidence="1">Belongs to the ABC transporter superfamily. Lipoprotein translocase (TC 3.A.1.125) family.</text>
</comment>
<accession>Q44613</accession>